<name>RS21_SYNE7</name>
<proteinExistence type="inferred from homology"/>
<accession>Q31MB5</accession>
<keyword id="KW-1185">Reference proteome</keyword>
<keyword id="KW-0687">Ribonucleoprotein</keyword>
<keyword id="KW-0689">Ribosomal protein</keyword>
<protein>
    <recommendedName>
        <fullName evidence="1">Small ribosomal subunit protein bS21</fullName>
    </recommendedName>
    <alternativeName>
        <fullName evidence="3">30S ribosomal protein S21</fullName>
    </alternativeName>
</protein>
<gene>
    <name evidence="1" type="primary">rpsU</name>
    <name evidence="1" type="synonym">rps21</name>
    <name type="ordered locus">Synpcc7942_1774</name>
</gene>
<reference key="1">
    <citation type="submission" date="2005-08" db="EMBL/GenBank/DDBJ databases">
        <title>Complete sequence of chromosome 1 of Synechococcus elongatus PCC 7942.</title>
        <authorList>
            <consortium name="US DOE Joint Genome Institute"/>
            <person name="Copeland A."/>
            <person name="Lucas S."/>
            <person name="Lapidus A."/>
            <person name="Barry K."/>
            <person name="Detter J.C."/>
            <person name="Glavina T."/>
            <person name="Hammon N."/>
            <person name="Israni S."/>
            <person name="Pitluck S."/>
            <person name="Schmutz J."/>
            <person name="Larimer F."/>
            <person name="Land M."/>
            <person name="Kyrpides N."/>
            <person name="Lykidis A."/>
            <person name="Golden S."/>
            <person name="Richardson P."/>
        </authorList>
    </citation>
    <scope>NUCLEOTIDE SEQUENCE [LARGE SCALE GENOMIC DNA]</scope>
    <source>
        <strain>ATCC 33912 / PCC 7942 / FACHB-805</strain>
    </source>
</reference>
<comment type="similarity">
    <text evidence="1">Belongs to the bacterial ribosomal protein bS21 family.</text>
</comment>
<dbReference type="EMBL" id="CP000100">
    <property type="protein sequence ID" value="ABB57804.1"/>
    <property type="molecule type" value="Genomic_DNA"/>
</dbReference>
<dbReference type="RefSeq" id="WP_011244628.1">
    <property type="nucleotide sequence ID" value="NZ_JACJTX010000001.1"/>
</dbReference>
<dbReference type="SMR" id="Q31MB5"/>
<dbReference type="STRING" id="1140.Synpcc7942_1774"/>
<dbReference type="PaxDb" id="1140-Synpcc7942_1774"/>
<dbReference type="GeneID" id="72430645"/>
<dbReference type="KEGG" id="syf:Synpcc7942_1774"/>
<dbReference type="eggNOG" id="COG0828">
    <property type="taxonomic scope" value="Bacteria"/>
</dbReference>
<dbReference type="HOGENOM" id="CLU_159258_3_1_3"/>
<dbReference type="OrthoDB" id="9799244at2"/>
<dbReference type="BioCyc" id="SYNEL:SYNPCC7942_1774-MONOMER"/>
<dbReference type="Proteomes" id="UP000889800">
    <property type="component" value="Chromosome"/>
</dbReference>
<dbReference type="GO" id="GO:1990904">
    <property type="term" value="C:ribonucleoprotein complex"/>
    <property type="evidence" value="ECO:0007669"/>
    <property type="project" value="UniProtKB-KW"/>
</dbReference>
<dbReference type="GO" id="GO:0005840">
    <property type="term" value="C:ribosome"/>
    <property type="evidence" value="ECO:0007669"/>
    <property type="project" value="UniProtKB-KW"/>
</dbReference>
<dbReference type="GO" id="GO:0003735">
    <property type="term" value="F:structural constituent of ribosome"/>
    <property type="evidence" value="ECO:0007669"/>
    <property type="project" value="InterPro"/>
</dbReference>
<dbReference type="GO" id="GO:0006412">
    <property type="term" value="P:translation"/>
    <property type="evidence" value="ECO:0007669"/>
    <property type="project" value="UniProtKB-UniRule"/>
</dbReference>
<dbReference type="Gene3D" id="1.20.5.1150">
    <property type="entry name" value="Ribosomal protein S8"/>
    <property type="match status" value="1"/>
</dbReference>
<dbReference type="HAMAP" id="MF_00358">
    <property type="entry name" value="Ribosomal_bS21"/>
    <property type="match status" value="1"/>
</dbReference>
<dbReference type="InterPro" id="IPR001911">
    <property type="entry name" value="Ribosomal_bS21"/>
</dbReference>
<dbReference type="InterPro" id="IPR018278">
    <property type="entry name" value="Ribosomal_bS21_CS"/>
</dbReference>
<dbReference type="InterPro" id="IPR038380">
    <property type="entry name" value="Ribosomal_bS21_sf"/>
</dbReference>
<dbReference type="NCBIfam" id="TIGR00030">
    <property type="entry name" value="S21p"/>
    <property type="match status" value="1"/>
</dbReference>
<dbReference type="PANTHER" id="PTHR21109">
    <property type="entry name" value="MITOCHONDRIAL 28S RIBOSOMAL PROTEIN S21"/>
    <property type="match status" value="1"/>
</dbReference>
<dbReference type="PANTHER" id="PTHR21109:SF22">
    <property type="entry name" value="SMALL RIBOSOMAL SUBUNIT PROTEIN BS21"/>
    <property type="match status" value="1"/>
</dbReference>
<dbReference type="Pfam" id="PF01165">
    <property type="entry name" value="Ribosomal_S21"/>
    <property type="match status" value="1"/>
</dbReference>
<dbReference type="PRINTS" id="PR00976">
    <property type="entry name" value="RIBOSOMALS21"/>
</dbReference>
<dbReference type="PROSITE" id="PS01181">
    <property type="entry name" value="RIBOSOMAL_S21"/>
    <property type="match status" value="1"/>
</dbReference>
<sequence>MAEVRLGENETIESALRRFKKKIQKAGILPEVRRREHYEKPSQRRKRKLEASRRRRR</sequence>
<organism>
    <name type="scientific">Synechococcus elongatus (strain ATCC 33912 / PCC 7942 / FACHB-805)</name>
    <name type="common">Anacystis nidulans R2</name>
    <dbReference type="NCBI Taxonomy" id="1140"/>
    <lineage>
        <taxon>Bacteria</taxon>
        <taxon>Bacillati</taxon>
        <taxon>Cyanobacteriota</taxon>
        <taxon>Cyanophyceae</taxon>
        <taxon>Synechococcales</taxon>
        <taxon>Synechococcaceae</taxon>
        <taxon>Synechococcus</taxon>
    </lineage>
</organism>
<feature type="chain" id="PRO_0000266789" description="Small ribosomal subunit protein bS21">
    <location>
        <begin position="1"/>
        <end position="57"/>
    </location>
</feature>
<feature type="region of interest" description="Disordered" evidence="2">
    <location>
        <begin position="32"/>
        <end position="57"/>
    </location>
</feature>
<feature type="compositionally biased region" description="Basic and acidic residues" evidence="2">
    <location>
        <begin position="32"/>
        <end position="42"/>
    </location>
</feature>
<feature type="compositionally biased region" description="Basic residues" evidence="2">
    <location>
        <begin position="43"/>
        <end position="57"/>
    </location>
</feature>
<evidence type="ECO:0000255" key="1">
    <source>
        <dbReference type="HAMAP-Rule" id="MF_00358"/>
    </source>
</evidence>
<evidence type="ECO:0000256" key="2">
    <source>
        <dbReference type="SAM" id="MobiDB-lite"/>
    </source>
</evidence>
<evidence type="ECO:0000305" key="3"/>